<geneLocation type="plasmid">
    <name>sym pNGR234a</name>
</geneLocation>
<comment type="function">
    <text evidence="1">Part of the ABC transporter complex NodIJ involved in the export of the nodulation factors (Nod factors), the bacterial signal molecules that induce symbiosis and subsequent nodulation induction. Nod factors are LCO (lipo-chitin oligosaccharide), a modified beta-1,4-linked N-acetylglucosamine oligosaccharide. This subunit encodes the transporter (By similarity).</text>
</comment>
<comment type="subunit">
    <text evidence="4">The complex is composed of two ATP-binding proteins (NodI) and two transmembrane proteins (NodJ).</text>
</comment>
<comment type="subcellular location">
    <subcellularLocation>
        <location evidence="4">Cell inner membrane</location>
        <topology evidence="4">Multi-pass membrane protein</topology>
    </subcellularLocation>
</comment>
<comment type="similarity">
    <text evidence="4">Belongs to the ABC-2 integral membrane protein family. Lipooligosaccharide exporter (TC 3.A.1.102) subfamily.</text>
</comment>
<gene>
    <name type="primary">nodJ</name>
    <name type="ordered locus">NGR_a03450</name>
    <name type="ORF">y4hE</name>
</gene>
<evidence type="ECO:0000250" key="1"/>
<evidence type="ECO:0000255" key="2"/>
<evidence type="ECO:0000255" key="3">
    <source>
        <dbReference type="PROSITE-ProRule" id="PRU00442"/>
    </source>
</evidence>
<evidence type="ECO:0000305" key="4"/>
<reference key="1">
    <citation type="journal article" date="1997" name="Nature">
        <title>Molecular basis of symbiosis between Rhizobium and legumes.</title>
        <authorList>
            <person name="Freiberg C.A."/>
            <person name="Fellay R."/>
            <person name="Bairoch A."/>
            <person name="Broughton W.J."/>
            <person name="Rosenthal A."/>
            <person name="Perret X."/>
        </authorList>
    </citation>
    <scope>NUCLEOTIDE SEQUENCE [LARGE SCALE GENOMIC DNA]</scope>
    <source>
        <strain>NBRC 101917 / NGR234</strain>
    </source>
</reference>
<reference key="2">
    <citation type="journal article" date="2009" name="Appl. Environ. Microbiol.">
        <title>Rhizobium sp. strain NGR234 possesses a remarkable number of secretion systems.</title>
        <authorList>
            <person name="Schmeisser C."/>
            <person name="Liesegang H."/>
            <person name="Krysciak D."/>
            <person name="Bakkou N."/>
            <person name="Le Quere A."/>
            <person name="Wollherr A."/>
            <person name="Heinemeyer I."/>
            <person name="Morgenstern B."/>
            <person name="Pommerening-Roeser A."/>
            <person name="Flores M."/>
            <person name="Palacios R."/>
            <person name="Brenner S."/>
            <person name="Gottschalk G."/>
            <person name="Schmitz R.A."/>
            <person name="Broughton W.J."/>
            <person name="Perret X."/>
            <person name="Strittmatter A.W."/>
            <person name="Streit W.R."/>
        </authorList>
    </citation>
    <scope>NUCLEOTIDE SEQUENCE [LARGE SCALE GENOMIC DNA]</scope>
    <source>
        <strain>NBRC 101917 / NGR234</strain>
    </source>
</reference>
<keyword id="KW-0997">Cell inner membrane</keyword>
<keyword id="KW-1003">Cell membrane</keyword>
<keyword id="KW-0472">Membrane</keyword>
<keyword id="KW-0536">Nodulation</keyword>
<keyword id="KW-0614">Plasmid</keyword>
<keyword id="KW-1185">Reference proteome</keyword>
<keyword id="KW-0812">Transmembrane</keyword>
<keyword id="KW-1133">Transmembrane helix</keyword>
<keyword id="KW-0813">Transport</keyword>
<sequence>MWKRYAAVLPANPWNWIAVWRRNYMAWKKAAIASILGNLAEPVTSLFGLGFGLGAMVGRVDGIPYVAFLAAGMVATSAMISATFETIHATFARMQAKRTWESALCTQLTLGDIVLGELAWAASKALLAGTAMMLVAATMGFASWPSVLFALPVIALTGFAFASLAMIVTALAPGYDYFIFYQTLFLTPMLFLSGAVFPVSQLPDIFQKLSHLLPLAHSIELIRPAMLDRPGGGVALHISALCIFAVMPFFLSVGLLQRRLLS</sequence>
<name>NODJ_SINFN</name>
<protein>
    <recommendedName>
        <fullName>Nodulation protein J</fullName>
    </recommendedName>
</protein>
<proteinExistence type="inferred from homology"/>
<accession>P55475</accession>
<organism>
    <name type="scientific">Sinorhizobium fredii (strain NBRC 101917 / NGR234)</name>
    <dbReference type="NCBI Taxonomy" id="394"/>
    <lineage>
        <taxon>Bacteria</taxon>
        <taxon>Pseudomonadati</taxon>
        <taxon>Pseudomonadota</taxon>
        <taxon>Alphaproteobacteria</taxon>
        <taxon>Hyphomicrobiales</taxon>
        <taxon>Rhizobiaceae</taxon>
        <taxon>Sinorhizobium/Ensifer group</taxon>
        <taxon>Sinorhizobium</taxon>
    </lineage>
</organism>
<dbReference type="EMBL" id="U00090">
    <property type="protein sequence ID" value="AAB91693.1"/>
    <property type="molecule type" value="Genomic_DNA"/>
</dbReference>
<dbReference type="RefSeq" id="NP_443881.1">
    <property type="nucleotide sequence ID" value="NC_000914.2"/>
</dbReference>
<dbReference type="RefSeq" id="WP_010875359.1">
    <property type="nucleotide sequence ID" value="NC_000914.2"/>
</dbReference>
<dbReference type="SMR" id="P55475"/>
<dbReference type="KEGG" id="rhi:NGR_a03450"/>
<dbReference type="PATRIC" id="fig|394.7.peg.354"/>
<dbReference type="eggNOG" id="COG0842">
    <property type="taxonomic scope" value="Bacteria"/>
</dbReference>
<dbReference type="HOGENOM" id="CLU_039483_3_1_5"/>
<dbReference type="OrthoDB" id="9778589at2"/>
<dbReference type="Proteomes" id="UP000001054">
    <property type="component" value="Plasmid pNGR234a"/>
</dbReference>
<dbReference type="GO" id="GO:0043190">
    <property type="term" value="C:ATP-binding cassette (ABC) transporter complex"/>
    <property type="evidence" value="ECO:0007669"/>
    <property type="project" value="InterPro"/>
</dbReference>
<dbReference type="GO" id="GO:0140359">
    <property type="term" value="F:ABC-type transporter activity"/>
    <property type="evidence" value="ECO:0007669"/>
    <property type="project" value="InterPro"/>
</dbReference>
<dbReference type="GO" id="GO:0015772">
    <property type="term" value="P:oligosaccharide transport"/>
    <property type="evidence" value="ECO:0007669"/>
    <property type="project" value="InterPro"/>
</dbReference>
<dbReference type="InterPro" id="IPR013525">
    <property type="entry name" value="ABC2_TM"/>
</dbReference>
<dbReference type="InterPro" id="IPR047817">
    <property type="entry name" value="ABC2_TM_bact-type"/>
</dbReference>
<dbReference type="InterPro" id="IPR000412">
    <property type="entry name" value="ABC_2_transport"/>
</dbReference>
<dbReference type="InterPro" id="IPR005981">
    <property type="entry name" value="ABC_transptNodJ"/>
</dbReference>
<dbReference type="InterPro" id="IPR051784">
    <property type="entry name" value="Nod_factor_ABC_transporter"/>
</dbReference>
<dbReference type="NCBIfam" id="TIGR01291">
    <property type="entry name" value="nodJ"/>
    <property type="match status" value="1"/>
</dbReference>
<dbReference type="PANTHER" id="PTHR43229">
    <property type="entry name" value="NODULATION PROTEIN J"/>
    <property type="match status" value="1"/>
</dbReference>
<dbReference type="PANTHER" id="PTHR43229:SF2">
    <property type="entry name" value="NODULATION PROTEIN J"/>
    <property type="match status" value="1"/>
</dbReference>
<dbReference type="Pfam" id="PF01061">
    <property type="entry name" value="ABC2_membrane"/>
    <property type="match status" value="1"/>
</dbReference>
<dbReference type="PIRSF" id="PIRSF006648">
    <property type="entry name" value="DrrB"/>
    <property type="match status" value="1"/>
</dbReference>
<dbReference type="PRINTS" id="PR00164">
    <property type="entry name" value="ABC2TRNSPORT"/>
</dbReference>
<dbReference type="PROSITE" id="PS51012">
    <property type="entry name" value="ABC_TM2"/>
    <property type="match status" value="1"/>
</dbReference>
<feature type="chain" id="PRO_0000182991" description="Nodulation protein J">
    <location>
        <begin position="1"/>
        <end position="262"/>
    </location>
</feature>
<feature type="transmembrane region" description="Helical" evidence="2">
    <location>
        <begin position="35"/>
        <end position="55"/>
    </location>
</feature>
<feature type="transmembrane region" description="Helical" evidence="2">
    <location>
        <begin position="62"/>
        <end position="82"/>
    </location>
</feature>
<feature type="transmembrane region" description="Helical" evidence="2">
    <location>
        <begin position="125"/>
        <end position="145"/>
    </location>
</feature>
<feature type="transmembrane region" description="Helical" evidence="2">
    <location>
        <begin position="147"/>
        <end position="167"/>
    </location>
</feature>
<feature type="transmembrane region" description="Helical" evidence="2">
    <location>
        <begin position="177"/>
        <end position="197"/>
    </location>
</feature>
<feature type="transmembrane region" description="Helical" evidence="2">
    <location>
        <begin position="236"/>
        <end position="256"/>
    </location>
</feature>
<feature type="domain" description="ABC transmembrane type-2" evidence="3">
    <location>
        <begin position="33"/>
        <end position="259"/>
    </location>
</feature>